<proteinExistence type="inferred from homology"/>
<gene>
    <name evidence="1" type="primary">ctaB</name>
    <name type="ordered locus">Tbd_0335</name>
</gene>
<dbReference type="EC" id="2.5.1.141" evidence="1"/>
<dbReference type="EMBL" id="CP000116">
    <property type="protein sequence ID" value="AAZ96288.1"/>
    <property type="molecule type" value="Genomic_DNA"/>
</dbReference>
<dbReference type="RefSeq" id="WP_011310848.1">
    <property type="nucleotide sequence ID" value="NC_007404.1"/>
</dbReference>
<dbReference type="SMR" id="Q3SLW5"/>
<dbReference type="STRING" id="292415.Tbd_0335"/>
<dbReference type="KEGG" id="tbd:Tbd_0335"/>
<dbReference type="eggNOG" id="COG0109">
    <property type="taxonomic scope" value="Bacteria"/>
</dbReference>
<dbReference type="HOGENOM" id="CLU_029631_0_2_4"/>
<dbReference type="OrthoDB" id="9814417at2"/>
<dbReference type="UniPathway" id="UPA00834">
    <property type="reaction ID" value="UER00712"/>
</dbReference>
<dbReference type="Proteomes" id="UP000008291">
    <property type="component" value="Chromosome"/>
</dbReference>
<dbReference type="GO" id="GO:0005886">
    <property type="term" value="C:plasma membrane"/>
    <property type="evidence" value="ECO:0007669"/>
    <property type="project" value="UniProtKB-SubCell"/>
</dbReference>
<dbReference type="GO" id="GO:0008495">
    <property type="term" value="F:protoheme IX farnesyltransferase activity"/>
    <property type="evidence" value="ECO:0007669"/>
    <property type="project" value="UniProtKB-UniRule"/>
</dbReference>
<dbReference type="GO" id="GO:0048034">
    <property type="term" value="P:heme O biosynthetic process"/>
    <property type="evidence" value="ECO:0007669"/>
    <property type="project" value="UniProtKB-UniRule"/>
</dbReference>
<dbReference type="CDD" id="cd13957">
    <property type="entry name" value="PT_UbiA_Cox10"/>
    <property type="match status" value="1"/>
</dbReference>
<dbReference type="Gene3D" id="1.10.357.140">
    <property type="entry name" value="UbiA prenyltransferase"/>
    <property type="match status" value="1"/>
</dbReference>
<dbReference type="HAMAP" id="MF_00154">
    <property type="entry name" value="CyoE_CtaB"/>
    <property type="match status" value="1"/>
</dbReference>
<dbReference type="InterPro" id="IPR006369">
    <property type="entry name" value="Protohaem_IX_farnesylTrfase"/>
</dbReference>
<dbReference type="InterPro" id="IPR000537">
    <property type="entry name" value="UbiA_prenyltransferase"/>
</dbReference>
<dbReference type="InterPro" id="IPR030470">
    <property type="entry name" value="UbiA_prenylTrfase_CS"/>
</dbReference>
<dbReference type="InterPro" id="IPR044878">
    <property type="entry name" value="UbiA_sf"/>
</dbReference>
<dbReference type="NCBIfam" id="TIGR01473">
    <property type="entry name" value="cyoE_ctaB"/>
    <property type="match status" value="1"/>
</dbReference>
<dbReference type="NCBIfam" id="NF003349">
    <property type="entry name" value="PRK04375.1-2"/>
    <property type="match status" value="1"/>
</dbReference>
<dbReference type="PANTHER" id="PTHR43448:SF7">
    <property type="entry name" value="4-HYDROXYBENZOATE SOLANESYLTRANSFERASE"/>
    <property type="match status" value="1"/>
</dbReference>
<dbReference type="PANTHER" id="PTHR43448">
    <property type="entry name" value="PROTOHEME IX FARNESYLTRANSFERASE, MITOCHONDRIAL"/>
    <property type="match status" value="1"/>
</dbReference>
<dbReference type="Pfam" id="PF01040">
    <property type="entry name" value="UbiA"/>
    <property type="match status" value="1"/>
</dbReference>
<dbReference type="PROSITE" id="PS00943">
    <property type="entry name" value="UBIA"/>
    <property type="match status" value="1"/>
</dbReference>
<sequence length="298" mass="32450">MESLMIQGAACRCQQFLALCKLRVVSLIVFTAVIGMFLAVPAWPSWTTIWAGTLGIGLVASAAAAFNCLIEQKIDAVMARTRARPLPRGELTGTQTLVFAGVLGGSGLLLLHTVVNPLTMWLTLATFVGYAVIYTVLLKPATPQNIVIGGASGAMPPVLGWAAATGEIHHDALLLFLIIFAWTPPHFWALALYRREEYARAGLPMLPVTHGEAYTRLHVLLYTLLLLAVSLLPVGTGMAGALYLVGAVLLGARFIQYGWALHREYSDALARRTFRYSIWYLAALFAIMLLDHYFPIPV</sequence>
<keyword id="KW-0997">Cell inner membrane</keyword>
<keyword id="KW-1003">Cell membrane</keyword>
<keyword id="KW-0350">Heme biosynthesis</keyword>
<keyword id="KW-0472">Membrane</keyword>
<keyword id="KW-1185">Reference proteome</keyword>
<keyword id="KW-0808">Transferase</keyword>
<keyword id="KW-0812">Transmembrane</keyword>
<keyword id="KW-1133">Transmembrane helix</keyword>
<reference key="1">
    <citation type="journal article" date="2006" name="J. Bacteriol.">
        <title>The genome sequence of the obligately chemolithoautotrophic, facultatively anaerobic bacterium Thiobacillus denitrificans.</title>
        <authorList>
            <person name="Beller H.R."/>
            <person name="Chain P.S."/>
            <person name="Letain T.E."/>
            <person name="Chakicherla A."/>
            <person name="Larimer F.W."/>
            <person name="Richardson P.M."/>
            <person name="Coleman M.A."/>
            <person name="Wood A.P."/>
            <person name="Kelly D.P."/>
        </authorList>
    </citation>
    <scope>NUCLEOTIDE SEQUENCE [LARGE SCALE GENOMIC DNA]</scope>
    <source>
        <strain>ATCC 25259 / T1</strain>
    </source>
</reference>
<evidence type="ECO:0000255" key="1">
    <source>
        <dbReference type="HAMAP-Rule" id="MF_00154"/>
    </source>
</evidence>
<protein>
    <recommendedName>
        <fullName evidence="1">Protoheme IX farnesyltransferase</fullName>
        <ecNumber evidence="1">2.5.1.141</ecNumber>
    </recommendedName>
    <alternativeName>
        <fullName evidence="1">Heme B farnesyltransferase</fullName>
    </alternativeName>
    <alternativeName>
        <fullName evidence="1">Heme O synthase</fullName>
    </alternativeName>
</protein>
<organism>
    <name type="scientific">Thiobacillus denitrificans (strain ATCC 25259 / T1)</name>
    <dbReference type="NCBI Taxonomy" id="292415"/>
    <lineage>
        <taxon>Bacteria</taxon>
        <taxon>Pseudomonadati</taxon>
        <taxon>Pseudomonadota</taxon>
        <taxon>Betaproteobacteria</taxon>
        <taxon>Nitrosomonadales</taxon>
        <taxon>Thiobacillaceae</taxon>
        <taxon>Thiobacillus</taxon>
    </lineage>
</organism>
<accession>Q3SLW5</accession>
<comment type="function">
    <text evidence="1">Converts heme B (protoheme IX) to heme O by substitution of the vinyl group on carbon 2 of heme B porphyrin ring with a hydroxyethyl farnesyl side group.</text>
</comment>
<comment type="catalytic activity">
    <reaction evidence="1">
        <text>heme b + (2E,6E)-farnesyl diphosphate + H2O = Fe(II)-heme o + diphosphate</text>
        <dbReference type="Rhea" id="RHEA:28070"/>
        <dbReference type="ChEBI" id="CHEBI:15377"/>
        <dbReference type="ChEBI" id="CHEBI:33019"/>
        <dbReference type="ChEBI" id="CHEBI:60344"/>
        <dbReference type="ChEBI" id="CHEBI:60530"/>
        <dbReference type="ChEBI" id="CHEBI:175763"/>
        <dbReference type="EC" id="2.5.1.141"/>
    </reaction>
</comment>
<comment type="pathway">
    <text evidence="1">Porphyrin-containing compound metabolism; heme O biosynthesis; heme O from protoheme: step 1/1.</text>
</comment>
<comment type="subcellular location">
    <subcellularLocation>
        <location evidence="1">Cell inner membrane</location>
        <topology evidence="1">Multi-pass membrane protein</topology>
    </subcellularLocation>
</comment>
<comment type="miscellaneous">
    <text evidence="1">Carbon 2 of the heme B porphyrin ring is defined according to the Fischer nomenclature.</text>
</comment>
<comment type="similarity">
    <text evidence="1">Belongs to the UbiA prenyltransferase family. Protoheme IX farnesyltransferase subfamily.</text>
</comment>
<feature type="chain" id="PRO_0000327184" description="Protoheme IX farnesyltransferase">
    <location>
        <begin position="1"/>
        <end position="298"/>
    </location>
</feature>
<feature type="transmembrane region" description="Helical" evidence="1">
    <location>
        <begin position="24"/>
        <end position="44"/>
    </location>
</feature>
<feature type="transmembrane region" description="Helical" evidence="1">
    <location>
        <begin position="46"/>
        <end position="66"/>
    </location>
</feature>
<feature type="transmembrane region" description="Helical" evidence="1">
    <location>
        <begin position="97"/>
        <end position="117"/>
    </location>
</feature>
<feature type="transmembrane region" description="Helical" evidence="1">
    <location>
        <begin position="118"/>
        <end position="138"/>
    </location>
</feature>
<feature type="transmembrane region" description="Helical" evidence="1">
    <location>
        <begin position="146"/>
        <end position="166"/>
    </location>
</feature>
<feature type="transmembrane region" description="Helical" evidence="1">
    <location>
        <begin position="172"/>
        <end position="192"/>
    </location>
</feature>
<feature type="transmembrane region" description="Helical" evidence="1">
    <location>
        <begin position="231"/>
        <end position="251"/>
    </location>
</feature>
<feature type="transmembrane region" description="Helical" evidence="1">
    <location>
        <begin position="278"/>
        <end position="298"/>
    </location>
</feature>
<name>COXX_THIDA</name>